<accession>C1DB68</accession>
<protein>
    <recommendedName>
        <fullName evidence="1">Lysine--tRNA ligase</fullName>
        <ecNumber evidence="1">6.1.1.6</ecNumber>
    </recommendedName>
    <alternativeName>
        <fullName evidence="1">Lysyl-tRNA synthetase</fullName>
        <shortName evidence="1">LysRS</shortName>
    </alternativeName>
</protein>
<proteinExistence type="inferred from homology"/>
<comment type="catalytic activity">
    <reaction evidence="1">
        <text>tRNA(Lys) + L-lysine + ATP = L-lysyl-tRNA(Lys) + AMP + diphosphate</text>
        <dbReference type="Rhea" id="RHEA:20792"/>
        <dbReference type="Rhea" id="RHEA-COMP:9696"/>
        <dbReference type="Rhea" id="RHEA-COMP:9697"/>
        <dbReference type="ChEBI" id="CHEBI:30616"/>
        <dbReference type="ChEBI" id="CHEBI:32551"/>
        <dbReference type="ChEBI" id="CHEBI:33019"/>
        <dbReference type="ChEBI" id="CHEBI:78442"/>
        <dbReference type="ChEBI" id="CHEBI:78529"/>
        <dbReference type="ChEBI" id="CHEBI:456215"/>
        <dbReference type="EC" id="6.1.1.6"/>
    </reaction>
</comment>
<comment type="cofactor">
    <cofactor evidence="1">
        <name>Mg(2+)</name>
        <dbReference type="ChEBI" id="CHEBI:18420"/>
    </cofactor>
    <text evidence="1">Binds 3 Mg(2+) ions per subunit.</text>
</comment>
<comment type="subunit">
    <text evidence="1">Homodimer.</text>
</comment>
<comment type="subcellular location">
    <subcellularLocation>
        <location evidence="1">Cytoplasm</location>
    </subcellularLocation>
</comment>
<comment type="similarity">
    <text evidence="1">Belongs to the class-II aminoacyl-tRNA synthetase family.</text>
</comment>
<sequence length="503" mass="56949">MSEQDITSQPAQDENQIMAERRQKLTEIRTSKGIAFPNDFRRQHLAAPLHAQYDATDKEALEAQPVEVVVAGRMMLKRVMGKASFATVQDSSGRIQFYISRDKVGEDVYADFKTWDMGDILGAKGTLMKTKTGELSVEVSELRLLSKSLRPLPDKFHGLADQEQKYRQRYVDLIINQDSRDTFIKRSKIVQTVREVMVGEDYLEVETPMMHPIPGGAAAKPFVTHHNALDMPLYLRIAPELYLKRLVVGGLERVFEINRNFRNEGMSTRHNPEFTMIEFYEAYCGYERMMEMTEKIIRRCAEAACGTTKVTYNGKEVDLGKPFDRFTIVGAIKHYNPQYTDEQLADEAWLKSEIKALGGKLPPAPGIGSLQLALFEECAEGKLWNPTFIIDYPVEVSPLARGSDADPSITERFELFIVGREHANGYSELNDPEDQAARFRSQVEQKDAGDDEAMHYDADYIRAMEYGLPPTGGCGIGIDRLVMLLTDAPSIRDVILFPHMRPE</sequence>
<evidence type="ECO:0000255" key="1">
    <source>
        <dbReference type="HAMAP-Rule" id="MF_00252"/>
    </source>
</evidence>
<gene>
    <name evidence="1" type="primary">lysS</name>
    <name type="ordered locus">LHK_02425</name>
</gene>
<organism>
    <name type="scientific">Laribacter hongkongensis (strain HLHK9)</name>
    <dbReference type="NCBI Taxonomy" id="557598"/>
    <lineage>
        <taxon>Bacteria</taxon>
        <taxon>Pseudomonadati</taxon>
        <taxon>Pseudomonadota</taxon>
        <taxon>Betaproteobacteria</taxon>
        <taxon>Neisseriales</taxon>
        <taxon>Aquaspirillaceae</taxon>
        <taxon>Laribacter</taxon>
    </lineage>
</organism>
<feature type="chain" id="PRO_1000125518" description="Lysine--tRNA ligase">
    <location>
        <begin position="1"/>
        <end position="503"/>
    </location>
</feature>
<feature type="binding site" evidence="1">
    <location>
        <position position="414"/>
    </location>
    <ligand>
        <name>Mg(2+)</name>
        <dbReference type="ChEBI" id="CHEBI:18420"/>
        <label>1</label>
    </ligand>
</feature>
<feature type="binding site" evidence="1">
    <location>
        <position position="421"/>
    </location>
    <ligand>
        <name>Mg(2+)</name>
        <dbReference type="ChEBI" id="CHEBI:18420"/>
        <label>1</label>
    </ligand>
</feature>
<feature type="binding site" evidence="1">
    <location>
        <position position="421"/>
    </location>
    <ligand>
        <name>Mg(2+)</name>
        <dbReference type="ChEBI" id="CHEBI:18420"/>
        <label>2</label>
    </ligand>
</feature>
<keyword id="KW-0030">Aminoacyl-tRNA synthetase</keyword>
<keyword id="KW-0067">ATP-binding</keyword>
<keyword id="KW-0963">Cytoplasm</keyword>
<keyword id="KW-0436">Ligase</keyword>
<keyword id="KW-0460">Magnesium</keyword>
<keyword id="KW-0479">Metal-binding</keyword>
<keyword id="KW-0547">Nucleotide-binding</keyword>
<keyword id="KW-0648">Protein biosynthesis</keyword>
<keyword id="KW-1185">Reference proteome</keyword>
<name>SYK_LARHH</name>
<dbReference type="EC" id="6.1.1.6" evidence="1"/>
<dbReference type="EMBL" id="CP001154">
    <property type="protein sequence ID" value="ACO75407.1"/>
    <property type="molecule type" value="Genomic_DNA"/>
</dbReference>
<dbReference type="RefSeq" id="WP_012697893.1">
    <property type="nucleotide sequence ID" value="NC_012559.1"/>
</dbReference>
<dbReference type="SMR" id="C1DB68"/>
<dbReference type="STRING" id="557598.LHK_02425"/>
<dbReference type="GeneID" id="75109935"/>
<dbReference type="KEGG" id="lhk:LHK_02425"/>
<dbReference type="eggNOG" id="COG1190">
    <property type="taxonomic scope" value="Bacteria"/>
</dbReference>
<dbReference type="HOGENOM" id="CLU_008255_6_0_4"/>
<dbReference type="Proteomes" id="UP000002010">
    <property type="component" value="Chromosome"/>
</dbReference>
<dbReference type="GO" id="GO:0005829">
    <property type="term" value="C:cytosol"/>
    <property type="evidence" value="ECO:0007669"/>
    <property type="project" value="TreeGrafter"/>
</dbReference>
<dbReference type="GO" id="GO:0005524">
    <property type="term" value="F:ATP binding"/>
    <property type="evidence" value="ECO:0007669"/>
    <property type="project" value="UniProtKB-UniRule"/>
</dbReference>
<dbReference type="GO" id="GO:0004824">
    <property type="term" value="F:lysine-tRNA ligase activity"/>
    <property type="evidence" value="ECO:0007669"/>
    <property type="project" value="UniProtKB-UniRule"/>
</dbReference>
<dbReference type="GO" id="GO:0000287">
    <property type="term" value="F:magnesium ion binding"/>
    <property type="evidence" value="ECO:0007669"/>
    <property type="project" value="UniProtKB-UniRule"/>
</dbReference>
<dbReference type="GO" id="GO:0000049">
    <property type="term" value="F:tRNA binding"/>
    <property type="evidence" value="ECO:0007669"/>
    <property type="project" value="TreeGrafter"/>
</dbReference>
<dbReference type="GO" id="GO:0006430">
    <property type="term" value="P:lysyl-tRNA aminoacylation"/>
    <property type="evidence" value="ECO:0007669"/>
    <property type="project" value="UniProtKB-UniRule"/>
</dbReference>
<dbReference type="CDD" id="cd00775">
    <property type="entry name" value="LysRS_core"/>
    <property type="match status" value="1"/>
</dbReference>
<dbReference type="CDD" id="cd04322">
    <property type="entry name" value="LysRS_N"/>
    <property type="match status" value="1"/>
</dbReference>
<dbReference type="FunFam" id="2.40.50.140:FF:000024">
    <property type="entry name" value="Lysine--tRNA ligase"/>
    <property type="match status" value="1"/>
</dbReference>
<dbReference type="FunFam" id="3.30.930.10:FF:000001">
    <property type="entry name" value="Lysine--tRNA ligase"/>
    <property type="match status" value="1"/>
</dbReference>
<dbReference type="Gene3D" id="3.30.930.10">
    <property type="entry name" value="Bira Bifunctional Protein, Domain 2"/>
    <property type="match status" value="1"/>
</dbReference>
<dbReference type="Gene3D" id="2.40.50.140">
    <property type="entry name" value="Nucleic acid-binding proteins"/>
    <property type="match status" value="1"/>
</dbReference>
<dbReference type="HAMAP" id="MF_00252">
    <property type="entry name" value="Lys_tRNA_synth_class2"/>
    <property type="match status" value="1"/>
</dbReference>
<dbReference type="InterPro" id="IPR004364">
    <property type="entry name" value="Aa-tRNA-synt_II"/>
</dbReference>
<dbReference type="InterPro" id="IPR006195">
    <property type="entry name" value="aa-tRNA-synth_II"/>
</dbReference>
<dbReference type="InterPro" id="IPR045864">
    <property type="entry name" value="aa-tRNA-synth_II/BPL/LPL"/>
</dbReference>
<dbReference type="InterPro" id="IPR002313">
    <property type="entry name" value="Lys-tRNA-ligase_II"/>
</dbReference>
<dbReference type="InterPro" id="IPR044136">
    <property type="entry name" value="Lys-tRNA-ligase_II_N"/>
</dbReference>
<dbReference type="InterPro" id="IPR018149">
    <property type="entry name" value="Lys-tRNA-synth_II_C"/>
</dbReference>
<dbReference type="InterPro" id="IPR012340">
    <property type="entry name" value="NA-bd_OB-fold"/>
</dbReference>
<dbReference type="InterPro" id="IPR004365">
    <property type="entry name" value="NA-bd_OB_tRNA"/>
</dbReference>
<dbReference type="NCBIfam" id="TIGR00499">
    <property type="entry name" value="lysS_bact"/>
    <property type="match status" value="1"/>
</dbReference>
<dbReference type="NCBIfam" id="NF001756">
    <property type="entry name" value="PRK00484.1"/>
    <property type="match status" value="1"/>
</dbReference>
<dbReference type="PANTHER" id="PTHR42918:SF15">
    <property type="entry name" value="LYSINE--TRNA LIGASE, CHLOROPLASTIC_MITOCHONDRIAL"/>
    <property type="match status" value="1"/>
</dbReference>
<dbReference type="PANTHER" id="PTHR42918">
    <property type="entry name" value="LYSYL-TRNA SYNTHETASE"/>
    <property type="match status" value="1"/>
</dbReference>
<dbReference type="Pfam" id="PF00152">
    <property type="entry name" value="tRNA-synt_2"/>
    <property type="match status" value="1"/>
</dbReference>
<dbReference type="Pfam" id="PF01336">
    <property type="entry name" value="tRNA_anti-codon"/>
    <property type="match status" value="1"/>
</dbReference>
<dbReference type="PRINTS" id="PR00982">
    <property type="entry name" value="TRNASYNTHLYS"/>
</dbReference>
<dbReference type="SUPFAM" id="SSF55681">
    <property type="entry name" value="Class II aaRS and biotin synthetases"/>
    <property type="match status" value="1"/>
</dbReference>
<dbReference type="SUPFAM" id="SSF50249">
    <property type="entry name" value="Nucleic acid-binding proteins"/>
    <property type="match status" value="1"/>
</dbReference>
<dbReference type="PROSITE" id="PS50862">
    <property type="entry name" value="AA_TRNA_LIGASE_II"/>
    <property type="match status" value="1"/>
</dbReference>
<reference key="1">
    <citation type="journal article" date="2009" name="PLoS Genet.">
        <title>The complete genome and proteome of Laribacter hongkongensis reveal potential mechanisms for adaptations to different temperatures and habitats.</title>
        <authorList>
            <person name="Woo P.C.Y."/>
            <person name="Lau S.K.P."/>
            <person name="Tse H."/>
            <person name="Teng J.L.L."/>
            <person name="Curreem S.O."/>
            <person name="Tsang A.K.L."/>
            <person name="Fan R.Y.Y."/>
            <person name="Wong G.K.M."/>
            <person name="Huang Y."/>
            <person name="Loman N.J."/>
            <person name="Snyder L.A.S."/>
            <person name="Cai J.J."/>
            <person name="Huang J.-D."/>
            <person name="Mak W."/>
            <person name="Pallen M.J."/>
            <person name="Lok S."/>
            <person name="Yuen K.-Y."/>
        </authorList>
    </citation>
    <scope>NUCLEOTIDE SEQUENCE [LARGE SCALE GENOMIC DNA]</scope>
    <source>
        <strain>HLHK9</strain>
    </source>
</reference>